<gene>
    <name evidence="1" type="primary">leuD</name>
    <name type="ordered locus">Tneu_0831</name>
</gene>
<feature type="chain" id="PRO_1000135851" description="3-isopropylmalate dehydratase small subunit">
    <location>
        <begin position="1"/>
        <end position="162"/>
    </location>
</feature>
<proteinExistence type="inferred from homology"/>
<sequence length="162" mass="17267">MKVRGKAIVYGDKIDTDVIIPAKYLVYTDPAVLGQHAMEPLDPEFPKKAKGAVLVAGRAFGMGSSREQAAIALKGAGVLAVVAESFARIFFRNAINVGLPVLQVPDVTKRVREGDELEVDIEGGYLLNLTTGERLEGKPLRGLPLAILKAGGLVNFLKTAGR</sequence>
<name>LEUD_PYRNV</name>
<evidence type="ECO:0000255" key="1">
    <source>
        <dbReference type="HAMAP-Rule" id="MF_01032"/>
    </source>
</evidence>
<organism>
    <name type="scientific">Pyrobaculum neutrophilum (strain DSM 2338 / JCM 9278 / NBRC 100436 / V24Sta)</name>
    <name type="common">Thermoproteus neutrophilus</name>
    <dbReference type="NCBI Taxonomy" id="444157"/>
    <lineage>
        <taxon>Archaea</taxon>
        <taxon>Thermoproteota</taxon>
        <taxon>Thermoprotei</taxon>
        <taxon>Thermoproteales</taxon>
        <taxon>Thermoproteaceae</taxon>
        <taxon>Pyrobaculum</taxon>
    </lineage>
</organism>
<reference key="1">
    <citation type="submission" date="2008-03" db="EMBL/GenBank/DDBJ databases">
        <title>Complete sequence of Thermoproteus neutrophilus V24Sta.</title>
        <authorList>
            <consortium name="US DOE Joint Genome Institute"/>
            <person name="Copeland A."/>
            <person name="Lucas S."/>
            <person name="Lapidus A."/>
            <person name="Glavina del Rio T."/>
            <person name="Dalin E."/>
            <person name="Tice H."/>
            <person name="Bruce D."/>
            <person name="Goodwin L."/>
            <person name="Pitluck S."/>
            <person name="Sims D."/>
            <person name="Brettin T."/>
            <person name="Detter J.C."/>
            <person name="Han C."/>
            <person name="Kuske C.R."/>
            <person name="Schmutz J."/>
            <person name="Larimer F."/>
            <person name="Land M."/>
            <person name="Hauser L."/>
            <person name="Kyrpides N."/>
            <person name="Mikhailova N."/>
            <person name="Biddle J.F."/>
            <person name="Zhang Z."/>
            <person name="Fitz-Gibbon S.T."/>
            <person name="Lowe T.M."/>
            <person name="Saltikov C."/>
            <person name="House C.H."/>
            <person name="Richardson P."/>
        </authorList>
    </citation>
    <scope>NUCLEOTIDE SEQUENCE [LARGE SCALE GENOMIC DNA]</scope>
    <source>
        <strain>DSM 2338 / JCM 9278 / NBRC 100436 / V24Sta</strain>
    </source>
</reference>
<accession>B1YDA5</accession>
<keyword id="KW-0028">Amino-acid biosynthesis</keyword>
<keyword id="KW-0100">Branched-chain amino acid biosynthesis</keyword>
<keyword id="KW-0432">Leucine biosynthesis</keyword>
<keyword id="KW-0456">Lyase</keyword>
<comment type="function">
    <text evidence="1">Catalyzes the isomerization between 2-isopropylmalate and 3-isopropylmalate, via the formation of 2-isopropylmaleate.</text>
</comment>
<comment type="catalytic activity">
    <reaction evidence="1">
        <text>(2R,3S)-3-isopropylmalate = (2S)-2-isopropylmalate</text>
        <dbReference type="Rhea" id="RHEA:32287"/>
        <dbReference type="ChEBI" id="CHEBI:1178"/>
        <dbReference type="ChEBI" id="CHEBI:35121"/>
        <dbReference type="EC" id="4.2.1.33"/>
    </reaction>
</comment>
<comment type="pathway">
    <text evidence="1">Amino-acid biosynthesis; L-leucine biosynthesis; L-leucine from 3-methyl-2-oxobutanoate: step 2/4.</text>
</comment>
<comment type="subunit">
    <text evidence="1">Heterodimer of LeuC and LeuD.</text>
</comment>
<comment type="similarity">
    <text evidence="1">Belongs to the LeuD family. LeuD type 2 subfamily.</text>
</comment>
<protein>
    <recommendedName>
        <fullName evidence="1">3-isopropylmalate dehydratase small subunit</fullName>
        <ecNumber evidence="1">4.2.1.33</ecNumber>
    </recommendedName>
    <alternativeName>
        <fullName evidence="1">Alpha-IPM isomerase</fullName>
        <shortName evidence="1">IPMI</shortName>
    </alternativeName>
    <alternativeName>
        <fullName evidence="1">Isopropylmalate isomerase</fullName>
    </alternativeName>
</protein>
<dbReference type="EC" id="4.2.1.33" evidence="1"/>
<dbReference type="EMBL" id="CP001014">
    <property type="protein sequence ID" value="ACB39768.1"/>
    <property type="molecule type" value="Genomic_DNA"/>
</dbReference>
<dbReference type="RefSeq" id="WP_012350188.1">
    <property type="nucleotide sequence ID" value="NC_010525.1"/>
</dbReference>
<dbReference type="SMR" id="B1YDA5"/>
<dbReference type="STRING" id="444157.Tneu_0831"/>
<dbReference type="GeneID" id="6164656"/>
<dbReference type="KEGG" id="tne:Tneu_0831"/>
<dbReference type="eggNOG" id="arCOG02230">
    <property type="taxonomic scope" value="Archaea"/>
</dbReference>
<dbReference type="HOGENOM" id="CLU_081378_1_1_2"/>
<dbReference type="OrthoDB" id="6505at2157"/>
<dbReference type="UniPathway" id="UPA00048">
    <property type="reaction ID" value="UER00071"/>
</dbReference>
<dbReference type="Proteomes" id="UP000001694">
    <property type="component" value="Chromosome"/>
</dbReference>
<dbReference type="GO" id="GO:0003861">
    <property type="term" value="F:3-isopropylmalate dehydratase activity"/>
    <property type="evidence" value="ECO:0007669"/>
    <property type="project" value="UniProtKB-UniRule"/>
</dbReference>
<dbReference type="GO" id="GO:0009098">
    <property type="term" value="P:L-leucine biosynthetic process"/>
    <property type="evidence" value="ECO:0007669"/>
    <property type="project" value="UniProtKB-UniRule"/>
</dbReference>
<dbReference type="CDD" id="cd01577">
    <property type="entry name" value="IPMI_Swivel"/>
    <property type="match status" value="1"/>
</dbReference>
<dbReference type="Gene3D" id="3.20.19.10">
    <property type="entry name" value="Aconitase, domain 4"/>
    <property type="match status" value="1"/>
</dbReference>
<dbReference type="HAMAP" id="MF_01032">
    <property type="entry name" value="LeuD_type2"/>
    <property type="match status" value="1"/>
</dbReference>
<dbReference type="InterPro" id="IPR015928">
    <property type="entry name" value="Aconitase/3IPM_dehydase_swvl"/>
</dbReference>
<dbReference type="InterPro" id="IPR000573">
    <property type="entry name" value="AconitaseA/IPMdHydase_ssu_swvl"/>
</dbReference>
<dbReference type="InterPro" id="IPR033940">
    <property type="entry name" value="IPMI_Swivel"/>
</dbReference>
<dbReference type="InterPro" id="IPR050075">
    <property type="entry name" value="LeuD"/>
</dbReference>
<dbReference type="InterPro" id="IPR011827">
    <property type="entry name" value="LeuD_type2/HacB/DmdB"/>
</dbReference>
<dbReference type="NCBIfam" id="TIGR02087">
    <property type="entry name" value="LEUD_arch"/>
    <property type="match status" value="1"/>
</dbReference>
<dbReference type="PANTHER" id="PTHR43345:SF2">
    <property type="entry name" value="3-ISOPROPYLMALATE DEHYDRATASE SMALL SUBUNIT 1"/>
    <property type="match status" value="1"/>
</dbReference>
<dbReference type="PANTHER" id="PTHR43345">
    <property type="entry name" value="3-ISOPROPYLMALATE DEHYDRATASE SMALL SUBUNIT 2-RELATED-RELATED"/>
    <property type="match status" value="1"/>
</dbReference>
<dbReference type="Pfam" id="PF00694">
    <property type="entry name" value="Aconitase_C"/>
    <property type="match status" value="1"/>
</dbReference>
<dbReference type="SUPFAM" id="SSF52016">
    <property type="entry name" value="LeuD/IlvD-like"/>
    <property type="match status" value="1"/>
</dbReference>